<keyword id="KW-0963">Cytoplasm</keyword>
<keyword id="KW-0238">DNA-binding</keyword>
<keyword id="KW-0804">Transcription</keyword>
<keyword id="KW-0805">Transcription regulation</keyword>
<gene>
    <name type="ordered locus">TW504</name>
</gene>
<protein>
    <recommendedName>
        <fullName evidence="1">Probable transcriptional regulatory protein TW504</fullName>
    </recommendedName>
</protein>
<name>Y504_TROW8</name>
<sequence length="252" mass="27243">MSGHSKWATIKRKKAVNDAQRSKNFAKLIRLIEVAAKQGGPDLAGNPGLAEAVQKAKKNSVPNDNIDRAIKRGSGLTGEHINYVSLVYEVKAFDGVALLVECLTDNKNRCAAGIRSIVTRSGCSMVNPGSLAYNFKRKGIVVLQDRDANGNLLSEDLVLSAVLEAEVDDIVPTGDCGFEIIAEPSNLSAVCNALRDSGIQYRSVETVYVPNSTVSLPEQKYDRIIRMIEALEESDDVQGVYTNLSGKDLACE</sequence>
<accession>P67192</accession>
<accession>Q83GK2</accession>
<accession>Q83HM7</accession>
<reference key="1">
    <citation type="journal article" date="2003" name="Lancet">
        <title>Sequencing and analysis of the genome of the Whipple's disease bacterium Tropheryma whipplei.</title>
        <authorList>
            <person name="Bentley S.D."/>
            <person name="Maiwald M."/>
            <person name="Murphy L.D."/>
            <person name="Pallen M.J."/>
            <person name="Yeats C.A."/>
            <person name="Dover L.G."/>
            <person name="Norbertczak H.T."/>
            <person name="Besra G.S."/>
            <person name="Quail M.A."/>
            <person name="Harris D.E."/>
            <person name="von Herbay A."/>
            <person name="Goble A."/>
            <person name="Rutter S."/>
            <person name="Squares R."/>
            <person name="Squares S."/>
            <person name="Barrell B.G."/>
            <person name="Parkhill J."/>
            <person name="Relman D.A."/>
        </authorList>
    </citation>
    <scope>NUCLEOTIDE SEQUENCE [LARGE SCALE GENOMIC DNA]</scope>
    <source>
        <strain>TW08/27</strain>
    </source>
</reference>
<organism>
    <name type="scientific">Tropheryma whipplei (strain TW08/27)</name>
    <name type="common">Whipple's bacillus</name>
    <dbReference type="NCBI Taxonomy" id="218496"/>
    <lineage>
        <taxon>Bacteria</taxon>
        <taxon>Bacillati</taxon>
        <taxon>Actinomycetota</taxon>
        <taxon>Actinomycetes</taxon>
        <taxon>Micrococcales</taxon>
        <taxon>Tropherymataceae</taxon>
        <taxon>Tropheryma</taxon>
    </lineage>
</organism>
<feature type="chain" id="PRO_0000175924" description="Probable transcriptional regulatory protein TW504">
    <location>
        <begin position="1"/>
        <end position="252"/>
    </location>
</feature>
<proteinExistence type="inferred from homology"/>
<dbReference type="EMBL" id="BX251411">
    <property type="protein sequence ID" value="CAD67171.1"/>
    <property type="molecule type" value="Genomic_DNA"/>
</dbReference>
<dbReference type="RefSeq" id="WP_011096451.1">
    <property type="nucleotide sequence ID" value="NC_004551.1"/>
</dbReference>
<dbReference type="SMR" id="P67192"/>
<dbReference type="GeneID" id="67388283"/>
<dbReference type="KEGG" id="tws:TW504"/>
<dbReference type="HOGENOM" id="CLU_062974_2_2_11"/>
<dbReference type="GO" id="GO:0005829">
    <property type="term" value="C:cytosol"/>
    <property type="evidence" value="ECO:0007669"/>
    <property type="project" value="TreeGrafter"/>
</dbReference>
<dbReference type="GO" id="GO:0003677">
    <property type="term" value="F:DNA binding"/>
    <property type="evidence" value="ECO:0007669"/>
    <property type="project" value="UniProtKB-UniRule"/>
</dbReference>
<dbReference type="GO" id="GO:0006355">
    <property type="term" value="P:regulation of DNA-templated transcription"/>
    <property type="evidence" value="ECO:0007669"/>
    <property type="project" value="UniProtKB-UniRule"/>
</dbReference>
<dbReference type="FunFam" id="1.10.10.200:FF:000002">
    <property type="entry name" value="Probable transcriptional regulatory protein CLM62_37755"/>
    <property type="match status" value="1"/>
</dbReference>
<dbReference type="Gene3D" id="1.10.10.200">
    <property type="match status" value="1"/>
</dbReference>
<dbReference type="Gene3D" id="3.30.70.980">
    <property type="match status" value="2"/>
</dbReference>
<dbReference type="HAMAP" id="MF_00693">
    <property type="entry name" value="Transcrip_reg_TACO1"/>
    <property type="match status" value="1"/>
</dbReference>
<dbReference type="InterPro" id="IPR017856">
    <property type="entry name" value="Integrase-like_N"/>
</dbReference>
<dbReference type="InterPro" id="IPR048300">
    <property type="entry name" value="TACO1_YebC-like_2nd/3rd_dom"/>
</dbReference>
<dbReference type="InterPro" id="IPR049083">
    <property type="entry name" value="TACO1_YebC_N"/>
</dbReference>
<dbReference type="InterPro" id="IPR002876">
    <property type="entry name" value="Transcrip_reg_TACO1-like"/>
</dbReference>
<dbReference type="InterPro" id="IPR026564">
    <property type="entry name" value="Transcrip_reg_TACO1-like_dom3"/>
</dbReference>
<dbReference type="InterPro" id="IPR029072">
    <property type="entry name" value="YebC-like"/>
</dbReference>
<dbReference type="NCBIfam" id="NF001030">
    <property type="entry name" value="PRK00110.1"/>
    <property type="match status" value="1"/>
</dbReference>
<dbReference type="NCBIfam" id="NF009044">
    <property type="entry name" value="PRK12378.1"/>
    <property type="match status" value="1"/>
</dbReference>
<dbReference type="NCBIfam" id="TIGR01033">
    <property type="entry name" value="YebC/PmpR family DNA-binding transcriptional regulator"/>
    <property type="match status" value="1"/>
</dbReference>
<dbReference type="PANTHER" id="PTHR12532:SF6">
    <property type="entry name" value="TRANSCRIPTIONAL REGULATORY PROTEIN YEBC-RELATED"/>
    <property type="match status" value="1"/>
</dbReference>
<dbReference type="PANTHER" id="PTHR12532">
    <property type="entry name" value="TRANSLATIONAL ACTIVATOR OF CYTOCHROME C OXIDASE 1"/>
    <property type="match status" value="1"/>
</dbReference>
<dbReference type="Pfam" id="PF20772">
    <property type="entry name" value="TACO1_YebC_N"/>
    <property type="match status" value="1"/>
</dbReference>
<dbReference type="Pfam" id="PF01709">
    <property type="entry name" value="Transcrip_reg"/>
    <property type="match status" value="1"/>
</dbReference>
<dbReference type="SUPFAM" id="SSF75625">
    <property type="entry name" value="YebC-like"/>
    <property type="match status" value="1"/>
</dbReference>
<comment type="subcellular location">
    <subcellularLocation>
        <location evidence="1">Cytoplasm</location>
    </subcellularLocation>
</comment>
<comment type="similarity">
    <text evidence="1">Belongs to the TACO1 family.</text>
</comment>
<evidence type="ECO:0000255" key="1">
    <source>
        <dbReference type="HAMAP-Rule" id="MF_00693"/>
    </source>
</evidence>